<reference key="1">
    <citation type="submission" date="2006-06" db="EMBL/GenBank/DDBJ databases">
        <title>Complete sequence of Rubrobacter xylanophilus DSM 9941.</title>
        <authorList>
            <consortium name="US DOE Joint Genome Institute"/>
            <person name="Copeland A."/>
            <person name="Lucas S."/>
            <person name="Lapidus A."/>
            <person name="Barry K."/>
            <person name="Detter J.C."/>
            <person name="Glavina del Rio T."/>
            <person name="Hammon N."/>
            <person name="Israni S."/>
            <person name="Dalin E."/>
            <person name="Tice H."/>
            <person name="Pitluck S."/>
            <person name="Munk A.C."/>
            <person name="Brettin T."/>
            <person name="Bruce D."/>
            <person name="Han C."/>
            <person name="Tapia R."/>
            <person name="Gilna P."/>
            <person name="Schmutz J."/>
            <person name="Larimer F."/>
            <person name="Land M."/>
            <person name="Hauser L."/>
            <person name="Kyrpides N."/>
            <person name="Lykidis A."/>
            <person name="da Costa M.S."/>
            <person name="Rainey F.A."/>
            <person name="Empadinhas N."/>
            <person name="Jolivet E."/>
            <person name="Battista J.R."/>
            <person name="Richardson P."/>
        </authorList>
    </citation>
    <scope>NUCLEOTIDE SEQUENCE [LARGE SCALE GENOMIC DNA]</scope>
    <source>
        <strain>DSM 9941 / JCM 11954 / NBRC 16129 / PRD-1</strain>
    </source>
</reference>
<keyword id="KW-0414">Isoprene biosynthesis</keyword>
<keyword id="KW-0548">Nucleotidyltransferase</keyword>
<keyword id="KW-1185">Reference proteome</keyword>
<keyword id="KW-0808">Transferase</keyword>
<comment type="function">
    <text evidence="1">Catalyzes the formation of 4-diphosphocytidyl-2-C-methyl-D-erythritol from CTP and 2-C-methyl-D-erythritol 4-phosphate (MEP).</text>
</comment>
<comment type="catalytic activity">
    <reaction evidence="1">
        <text>2-C-methyl-D-erythritol 4-phosphate + CTP + H(+) = 4-CDP-2-C-methyl-D-erythritol + diphosphate</text>
        <dbReference type="Rhea" id="RHEA:13429"/>
        <dbReference type="ChEBI" id="CHEBI:15378"/>
        <dbReference type="ChEBI" id="CHEBI:33019"/>
        <dbReference type="ChEBI" id="CHEBI:37563"/>
        <dbReference type="ChEBI" id="CHEBI:57823"/>
        <dbReference type="ChEBI" id="CHEBI:58262"/>
        <dbReference type="EC" id="2.7.7.60"/>
    </reaction>
</comment>
<comment type="pathway">
    <text evidence="1">Isoprenoid biosynthesis; isopentenyl diphosphate biosynthesis via DXP pathway; isopentenyl diphosphate from 1-deoxy-D-xylulose 5-phosphate: step 2/6.</text>
</comment>
<comment type="similarity">
    <text evidence="1">Belongs to the IspD/TarI cytidylyltransferase family. IspD subfamily.</text>
</comment>
<name>ISPD_RUBXD</name>
<sequence length="231" mass="24800">MSGAVALVLAGGSGTRMGRPKQFIELLGRPALYHTLRAFQEAREVERIYAVGEEERIRDLASGCGIDKLCGCARPGESRALSARNGLLLCGEEDGVICLIHDGSRCLVTPQLIGRVVRAVEEGADGAIPAVPVPDTIKVADGERVLKTLDRSSLRAAQTPQAFRLGLLRRVFSAPEEVLREATDDASLVERAGGEVRLVPGERTNIKLTSPEDLVLAEAILAARERRGSRL</sequence>
<organism>
    <name type="scientific">Rubrobacter xylanophilus (strain DSM 9941 / JCM 11954 / NBRC 16129 / PRD-1)</name>
    <dbReference type="NCBI Taxonomy" id="266117"/>
    <lineage>
        <taxon>Bacteria</taxon>
        <taxon>Bacillati</taxon>
        <taxon>Actinomycetota</taxon>
        <taxon>Rubrobacteria</taxon>
        <taxon>Rubrobacterales</taxon>
        <taxon>Rubrobacteraceae</taxon>
        <taxon>Rubrobacter</taxon>
    </lineage>
</organism>
<gene>
    <name evidence="1" type="primary">ispD</name>
    <name type="ordered locus">Rxyl_2176</name>
</gene>
<proteinExistence type="inferred from homology"/>
<evidence type="ECO:0000255" key="1">
    <source>
        <dbReference type="HAMAP-Rule" id="MF_00108"/>
    </source>
</evidence>
<accession>Q1AU08</accession>
<protein>
    <recommendedName>
        <fullName evidence="1">2-C-methyl-D-erythritol 4-phosphate cytidylyltransferase</fullName>
        <ecNumber evidence="1">2.7.7.60</ecNumber>
    </recommendedName>
    <alternativeName>
        <fullName evidence="1">4-diphosphocytidyl-2C-methyl-D-erythritol synthase</fullName>
    </alternativeName>
    <alternativeName>
        <fullName evidence="1">MEP cytidylyltransferase</fullName>
        <shortName evidence="1">MCT</shortName>
    </alternativeName>
</protein>
<feature type="chain" id="PRO_1000071320" description="2-C-methyl-D-erythritol 4-phosphate cytidylyltransferase">
    <location>
        <begin position="1"/>
        <end position="231"/>
    </location>
</feature>
<feature type="site" description="Transition state stabilizer" evidence="1">
    <location>
        <position position="16"/>
    </location>
</feature>
<feature type="site" description="Transition state stabilizer" evidence="1">
    <location>
        <position position="21"/>
    </location>
</feature>
<feature type="site" description="Positions MEP for the nucleophilic attack" evidence="1">
    <location>
        <position position="151"/>
    </location>
</feature>
<feature type="site" description="Positions MEP for the nucleophilic attack" evidence="1">
    <location>
        <position position="207"/>
    </location>
</feature>
<dbReference type="EC" id="2.7.7.60" evidence="1"/>
<dbReference type="EMBL" id="CP000386">
    <property type="protein sequence ID" value="ABG05120.1"/>
    <property type="molecule type" value="Genomic_DNA"/>
</dbReference>
<dbReference type="RefSeq" id="WP_011565134.1">
    <property type="nucleotide sequence ID" value="NC_008148.1"/>
</dbReference>
<dbReference type="SMR" id="Q1AU08"/>
<dbReference type="STRING" id="266117.Rxyl_2176"/>
<dbReference type="KEGG" id="rxy:Rxyl_2176"/>
<dbReference type="eggNOG" id="COG1211">
    <property type="taxonomic scope" value="Bacteria"/>
</dbReference>
<dbReference type="HOGENOM" id="CLU_061281_2_2_11"/>
<dbReference type="PhylomeDB" id="Q1AU08"/>
<dbReference type="UniPathway" id="UPA00056">
    <property type="reaction ID" value="UER00093"/>
</dbReference>
<dbReference type="Proteomes" id="UP000006637">
    <property type="component" value="Chromosome"/>
</dbReference>
<dbReference type="GO" id="GO:0050518">
    <property type="term" value="F:2-C-methyl-D-erythritol 4-phosphate cytidylyltransferase activity"/>
    <property type="evidence" value="ECO:0007669"/>
    <property type="project" value="UniProtKB-UniRule"/>
</dbReference>
<dbReference type="GO" id="GO:0019288">
    <property type="term" value="P:isopentenyl diphosphate biosynthetic process, methylerythritol 4-phosphate pathway"/>
    <property type="evidence" value="ECO:0007669"/>
    <property type="project" value="UniProtKB-UniRule"/>
</dbReference>
<dbReference type="CDD" id="cd02516">
    <property type="entry name" value="CDP-ME_synthetase"/>
    <property type="match status" value="1"/>
</dbReference>
<dbReference type="FunFam" id="3.90.550.10:FF:000003">
    <property type="entry name" value="2-C-methyl-D-erythritol 4-phosphate cytidylyltransferase"/>
    <property type="match status" value="1"/>
</dbReference>
<dbReference type="Gene3D" id="3.90.550.10">
    <property type="entry name" value="Spore Coat Polysaccharide Biosynthesis Protein SpsA, Chain A"/>
    <property type="match status" value="1"/>
</dbReference>
<dbReference type="HAMAP" id="MF_00108">
    <property type="entry name" value="IspD"/>
    <property type="match status" value="1"/>
</dbReference>
<dbReference type="InterPro" id="IPR001228">
    <property type="entry name" value="IspD"/>
</dbReference>
<dbReference type="InterPro" id="IPR034683">
    <property type="entry name" value="IspD/TarI"/>
</dbReference>
<dbReference type="InterPro" id="IPR050088">
    <property type="entry name" value="IspD/TarI_cytidylyltransf_bact"/>
</dbReference>
<dbReference type="InterPro" id="IPR029044">
    <property type="entry name" value="Nucleotide-diphossugar_trans"/>
</dbReference>
<dbReference type="NCBIfam" id="TIGR00453">
    <property type="entry name" value="ispD"/>
    <property type="match status" value="1"/>
</dbReference>
<dbReference type="PANTHER" id="PTHR32125">
    <property type="entry name" value="2-C-METHYL-D-ERYTHRITOL 4-PHOSPHATE CYTIDYLYLTRANSFERASE, CHLOROPLASTIC"/>
    <property type="match status" value="1"/>
</dbReference>
<dbReference type="PANTHER" id="PTHR32125:SF4">
    <property type="entry name" value="2-C-METHYL-D-ERYTHRITOL 4-PHOSPHATE CYTIDYLYLTRANSFERASE, CHLOROPLASTIC"/>
    <property type="match status" value="1"/>
</dbReference>
<dbReference type="Pfam" id="PF01128">
    <property type="entry name" value="IspD"/>
    <property type="match status" value="1"/>
</dbReference>
<dbReference type="SUPFAM" id="SSF53448">
    <property type="entry name" value="Nucleotide-diphospho-sugar transferases"/>
    <property type="match status" value="1"/>
</dbReference>